<keyword id="KW-0233">DNA recombination</keyword>
<keyword id="KW-0238">DNA-binding</keyword>
<keyword id="KW-1185">Reference proteome</keyword>
<keyword id="KW-0804">Transcription</keyword>
<keyword id="KW-0805">Transcription regulation</keyword>
<keyword id="KW-0810">Translation regulation</keyword>
<name>IHFA_SHEDO</name>
<reference key="1">
    <citation type="submission" date="2006-03" db="EMBL/GenBank/DDBJ databases">
        <title>Complete sequence of Shewanella denitrificans OS217.</title>
        <authorList>
            <consortium name="US DOE Joint Genome Institute"/>
            <person name="Copeland A."/>
            <person name="Lucas S."/>
            <person name="Lapidus A."/>
            <person name="Barry K."/>
            <person name="Detter J.C."/>
            <person name="Glavina del Rio T."/>
            <person name="Hammon N."/>
            <person name="Israni S."/>
            <person name="Dalin E."/>
            <person name="Tice H."/>
            <person name="Pitluck S."/>
            <person name="Brettin T."/>
            <person name="Bruce D."/>
            <person name="Han C."/>
            <person name="Tapia R."/>
            <person name="Gilna P."/>
            <person name="Kiss H."/>
            <person name="Schmutz J."/>
            <person name="Larimer F."/>
            <person name="Land M."/>
            <person name="Hauser L."/>
            <person name="Kyrpides N."/>
            <person name="Lykidis A."/>
            <person name="Richardson P."/>
        </authorList>
    </citation>
    <scope>NUCLEOTIDE SEQUENCE [LARGE SCALE GENOMIC DNA]</scope>
    <source>
        <strain>OS217 / ATCC BAA-1090 / DSM 15013</strain>
    </source>
</reference>
<organism>
    <name type="scientific">Shewanella denitrificans (strain OS217 / ATCC BAA-1090 / DSM 15013)</name>
    <dbReference type="NCBI Taxonomy" id="318161"/>
    <lineage>
        <taxon>Bacteria</taxon>
        <taxon>Pseudomonadati</taxon>
        <taxon>Pseudomonadota</taxon>
        <taxon>Gammaproteobacteria</taxon>
        <taxon>Alteromonadales</taxon>
        <taxon>Shewanellaceae</taxon>
        <taxon>Shewanella</taxon>
    </lineage>
</organism>
<proteinExistence type="inferred from homology"/>
<gene>
    <name evidence="1" type="primary">ihfA</name>
    <name evidence="1" type="synonym">himA</name>
    <name type="ordered locus">Sden_1604</name>
</gene>
<accession>Q12NT8</accession>
<feature type="chain" id="PRO_0000277773" description="Integration host factor subunit alpha">
    <location>
        <begin position="1"/>
        <end position="99"/>
    </location>
</feature>
<feature type="region of interest" description="Disordered" evidence="2">
    <location>
        <begin position="49"/>
        <end position="71"/>
    </location>
</feature>
<comment type="function">
    <text evidence="1">This protein is one of the two subunits of integration host factor, a specific DNA-binding protein that functions in genetic recombination as well as in transcriptional and translational control.</text>
</comment>
<comment type="subunit">
    <text evidence="1">Heterodimer of an alpha and a beta chain.</text>
</comment>
<comment type="similarity">
    <text evidence="1">Belongs to the bacterial histone-like protein family.</text>
</comment>
<dbReference type="EMBL" id="CP000302">
    <property type="protein sequence ID" value="ABE54888.1"/>
    <property type="molecule type" value="Genomic_DNA"/>
</dbReference>
<dbReference type="RefSeq" id="WP_011496046.1">
    <property type="nucleotide sequence ID" value="NC_007954.1"/>
</dbReference>
<dbReference type="SMR" id="Q12NT8"/>
<dbReference type="STRING" id="318161.Sden_1604"/>
<dbReference type="KEGG" id="sdn:Sden_1604"/>
<dbReference type="eggNOG" id="COG0776">
    <property type="taxonomic scope" value="Bacteria"/>
</dbReference>
<dbReference type="HOGENOM" id="CLU_105066_1_3_6"/>
<dbReference type="OrthoDB" id="9797747at2"/>
<dbReference type="Proteomes" id="UP000001982">
    <property type="component" value="Chromosome"/>
</dbReference>
<dbReference type="GO" id="GO:0005829">
    <property type="term" value="C:cytosol"/>
    <property type="evidence" value="ECO:0007669"/>
    <property type="project" value="TreeGrafter"/>
</dbReference>
<dbReference type="GO" id="GO:0003677">
    <property type="term" value="F:DNA binding"/>
    <property type="evidence" value="ECO:0007669"/>
    <property type="project" value="UniProtKB-UniRule"/>
</dbReference>
<dbReference type="GO" id="GO:0030527">
    <property type="term" value="F:structural constituent of chromatin"/>
    <property type="evidence" value="ECO:0007669"/>
    <property type="project" value="InterPro"/>
</dbReference>
<dbReference type="GO" id="GO:0006310">
    <property type="term" value="P:DNA recombination"/>
    <property type="evidence" value="ECO:0007669"/>
    <property type="project" value="UniProtKB-UniRule"/>
</dbReference>
<dbReference type="GO" id="GO:0009893">
    <property type="term" value="P:positive regulation of metabolic process"/>
    <property type="evidence" value="ECO:0007669"/>
    <property type="project" value="UniProtKB-ARBA"/>
</dbReference>
<dbReference type="GO" id="GO:0006355">
    <property type="term" value="P:regulation of DNA-templated transcription"/>
    <property type="evidence" value="ECO:0007669"/>
    <property type="project" value="UniProtKB-UniRule"/>
</dbReference>
<dbReference type="GO" id="GO:0006417">
    <property type="term" value="P:regulation of translation"/>
    <property type="evidence" value="ECO:0007669"/>
    <property type="project" value="UniProtKB-UniRule"/>
</dbReference>
<dbReference type="CDD" id="cd13835">
    <property type="entry name" value="IHF_A"/>
    <property type="match status" value="1"/>
</dbReference>
<dbReference type="FunFam" id="4.10.520.10:FF:000002">
    <property type="entry name" value="Integration host factor subunit alpha"/>
    <property type="match status" value="1"/>
</dbReference>
<dbReference type="Gene3D" id="4.10.520.10">
    <property type="entry name" value="IHF-like DNA-binding proteins"/>
    <property type="match status" value="1"/>
</dbReference>
<dbReference type="HAMAP" id="MF_00380">
    <property type="entry name" value="IHF_alpha"/>
    <property type="match status" value="1"/>
</dbReference>
<dbReference type="InterPro" id="IPR000119">
    <property type="entry name" value="Hist_DNA-bd"/>
</dbReference>
<dbReference type="InterPro" id="IPR020816">
    <property type="entry name" value="Histone-like_DNA-bd_CS"/>
</dbReference>
<dbReference type="InterPro" id="IPR010992">
    <property type="entry name" value="IHF-like_DNA-bd_dom_sf"/>
</dbReference>
<dbReference type="InterPro" id="IPR005684">
    <property type="entry name" value="IHF_alpha"/>
</dbReference>
<dbReference type="NCBIfam" id="TIGR00987">
    <property type="entry name" value="himA"/>
    <property type="match status" value="1"/>
</dbReference>
<dbReference type="NCBIfam" id="NF001401">
    <property type="entry name" value="PRK00285.1"/>
    <property type="match status" value="1"/>
</dbReference>
<dbReference type="PANTHER" id="PTHR33175">
    <property type="entry name" value="DNA-BINDING PROTEIN HU"/>
    <property type="match status" value="1"/>
</dbReference>
<dbReference type="PANTHER" id="PTHR33175:SF2">
    <property type="entry name" value="INTEGRATION HOST FACTOR SUBUNIT ALPHA"/>
    <property type="match status" value="1"/>
</dbReference>
<dbReference type="Pfam" id="PF00216">
    <property type="entry name" value="Bac_DNA_binding"/>
    <property type="match status" value="1"/>
</dbReference>
<dbReference type="PRINTS" id="PR01727">
    <property type="entry name" value="DNABINDINGHU"/>
</dbReference>
<dbReference type="SMART" id="SM00411">
    <property type="entry name" value="BHL"/>
    <property type="match status" value="1"/>
</dbReference>
<dbReference type="SUPFAM" id="SSF47729">
    <property type="entry name" value="IHF-like DNA-binding proteins"/>
    <property type="match status" value="1"/>
</dbReference>
<dbReference type="PROSITE" id="PS00045">
    <property type="entry name" value="HISTONE_LIKE"/>
    <property type="match status" value="1"/>
</dbReference>
<evidence type="ECO:0000255" key="1">
    <source>
        <dbReference type="HAMAP-Rule" id="MF_00380"/>
    </source>
</evidence>
<evidence type="ECO:0000256" key="2">
    <source>
        <dbReference type="SAM" id="MobiDB-lite"/>
    </source>
</evidence>
<protein>
    <recommendedName>
        <fullName evidence="1">Integration host factor subunit alpha</fullName>
        <shortName evidence="1">IHF-alpha</shortName>
    </recommendedName>
</protein>
<sequence length="99" mass="11133">MALTKAEMAEHLFETLGLNKRVAKEMVESFFEEIREALESGEQVKLSGFGNFDLRDKNQRPGRNPKTGEDIPISARRVVTFRPGQKLKARVEAANSGKK</sequence>